<protein>
    <recommendedName>
        <fullName evidence="1">S-adenosylmethionine decarboxylase proenzyme</fullName>
        <shortName evidence="1">AdoMetDC</shortName>
        <shortName evidence="1">SAMDC</shortName>
        <ecNumber evidence="1">4.1.1.50</ecNumber>
    </recommendedName>
    <component>
        <recommendedName>
            <fullName evidence="1">S-adenosylmethionine decarboxylase beta chain</fullName>
        </recommendedName>
    </component>
    <component>
        <recommendedName>
            <fullName evidence="1">S-adenosylmethionine decarboxylase alpha chain</fullName>
        </recommendedName>
    </component>
</protein>
<evidence type="ECO:0000255" key="1">
    <source>
        <dbReference type="HAMAP-Rule" id="MF_00465"/>
    </source>
</evidence>
<proteinExistence type="inferred from homology"/>
<feature type="chain" id="PRO_0000364421" description="S-adenosylmethionine decarboxylase beta chain" evidence="1">
    <location>
        <begin position="1"/>
        <end position="112"/>
    </location>
</feature>
<feature type="chain" id="PRO_0000364422" description="S-adenosylmethionine decarboxylase alpha chain" evidence="1">
    <location>
        <begin position="113"/>
        <end position="264"/>
    </location>
</feature>
<feature type="active site" description="Schiff-base intermediate with substrate; via pyruvic acid" evidence="1">
    <location>
        <position position="113"/>
    </location>
</feature>
<feature type="active site" description="Proton acceptor; for processing activity" evidence="1">
    <location>
        <position position="118"/>
    </location>
</feature>
<feature type="active site" description="Proton donor; for catalytic activity" evidence="1">
    <location>
        <position position="141"/>
    </location>
</feature>
<feature type="site" description="Cleavage (non-hydrolytic); by autolysis" evidence="1">
    <location>
        <begin position="112"/>
        <end position="113"/>
    </location>
</feature>
<feature type="modified residue" description="Pyruvic acid (Ser); by autocatalysis" evidence="1">
    <location>
        <position position="113"/>
    </location>
</feature>
<gene>
    <name evidence="1" type="primary">speD</name>
    <name type="ordered locus">PXO_04007</name>
</gene>
<sequence>MVKPLPRLRLQGFNNLTKALSFNIYDVCYARTEEERQRYIEYIDEQYDADRLTQILTDVAEIIGANILNIARQDYDPQGASVTILISEEPVIDKKQAGRELISDAVVAHMDKSHITVHTYPETHPQEGIATFRADIDVATCGVISPLKALNYLIETLESDIVIMDYRVRGFTRDVKGKKHYIDHKINSIQHFLAKNVKSRYEMIDVNVYQENIFHTKMHLKDFDLDQYLFEERAKNLSFKERMKIETLLKREIEELFHGRNLSE</sequence>
<accession>B2SL06</accession>
<name>SPED_XANOP</name>
<keyword id="KW-0068">Autocatalytic cleavage</keyword>
<keyword id="KW-0210">Decarboxylase</keyword>
<keyword id="KW-0456">Lyase</keyword>
<keyword id="KW-0620">Polyamine biosynthesis</keyword>
<keyword id="KW-0670">Pyruvate</keyword>
<keyword id="KW-0949">S-adenosyl-L-methionine</keyword>
<keyword id="KW-0704">Schiff base</keyword>
<keyword id="KW-0745">Spermidine biosynthesis</keyword>
<keyword id="KW-0865">Zymogen</keyword>
<organism>
    <name type="scientific">Xanthomonas oryzae pv. oryzae (strain PXO99A)</name>
    <dbReference type="NCBI Taxonomy" id="360094"/>
    <lineage>
        <taxon>Bacteria</taxon>
        <taxon>Pseudomonadati</taxon>
        <taxon>Pseudomonadota</taxon>
        <taxon>Gammaproteobacteria</taxon>
        <taxon>Lysobacterales</taxon>
        <taxon>Lysobacteraceae</taxon>
        <taxon>Xanthomonas</taxon>
    </lineage>
</organism>
<reference key="1">
    <citation type="journal article" date="2008" name="BMC Genomics">
        <title>Genome sequence and rapid evolution of the rice pathogen Xanthomonas oryzae pv. oryzae PXO99A.</title>
        <authorList>
            <person name="Salzberg S.L."/>
            <person name="Sommer D.D."/>
            <person name="Schatz M.C."/>
            <person name="Phillippy A.M."/>
            <person name="Rabinowicz P.D."/>
            <person name="Tsuge S."/>
            <person name="Furutani A."/>
            <person name="Ochiai H."/>
            <person name="Delcher A.L."/>
            <person name="Kelley D."/>
            <person name="Madupu R."/>
            <person name="Puiu D."/>
            <person name="Radune D."/>
            <person name="Shumway M."/>
            <person name="Trapnell C."/>
            <person name="Aparna G."/>
            <person name="Jha G."/>
            <person name="Pandey A."/>
            <person name="Patil P.B."/>
            <person name="Ishihara H."/>
            <person name="Meyer D.F."/>
            <person name="Szurek B."/>
            <person name="Verdier V."/>
            <person name="Koebnik R."/>
            <person name="Dow J.M."/>
            <person name="Ryan R.P."/>
            <person name="Hirata H."/>
            <person name="Tsuyumu S."/>
            <person name="Won Lee S."/>
            <person name="Seo Y.-S."/>
            <person name="Sriariyanum M."/>
            <person name="Ronald P.C."/>
            <person name="Sonti R.V."/>
            <person name="Van Sluys M.-A."/>
            <person name="Leach J.E."/>
            <person name="White F.F."/>
            <person name="Bogdanove A.J."/>
        </authorList>
    </citation>
    <scope>NUCLEOTIDE SEQUENCE [LARGE SCALE GENOMIC DNA]</scope>
    <source>
        <strain>PXO99A</strain>
    </source>
</reference>
<dbReference type="EC" id="4.1.1.50" evidence="1"/>
<dbReference type="EMBL" id="CP000967">
    <property type="protein sequence ID" value="ACD57283.1"/>
    <property type="molecule type" value="Genomic_DNA"/>
</dbReference>
<dbReference type="RefSeq" id="WP_011260494.1">
    <property type="nucleotide sequence ID" value="NC_010717.2"/>
</dbReference>
<dbReference type="SMR" id="B2SL06"/>
<dbReference type="GeneID" id="77335852"/>
<dbReference type="KEGG" id="xop:PXO_04007"/>
<dbReference type="eggNOG" id="COG1586">
    <property type="taxonomic scope" value="Bacteria"/>
</dbReference>
<dbReference type="HOGENOM" id="CLU_092007_0_0_6"/>
<dbReference type="UniPathway" id="UPA00331">
    <property type="reaction ID" value="UER00451"/>
</dbReference>
<dbReference type="Proteomes" id="UP000001740">
    <property type="component" value="Chromosome"/>
</dbReference>
<dbReference type="GO" id="GO:0005829">
    <property type="term" value="C:cytosol"/>
    <property type="evidence" value="ECO:0007669"/>
    <property type="project" value="TreeGrafter"/>
</dbReference>
<dbReference type="GO" id="GO:0004014">
    <property type="term" value="F:adenosylmethionine decarboxylase activity"/>
    <property type="evidence" value="ECO:0007669"/>
    <property type="project" value="UniProtKB-UniRule"/>
</dbReference>
<dbReference type="GO" id="GO:0008295">
    <property type="term" value="P:spermidine biosynthetic process"/>
    <property type="evidence" value="ECO:0007669"/>
    <property type="project" value="UniProtKB-UniRule"/>
</dbReference>
<dbReference type="FunFam" id="3.60.90.10:FF:000001">
    <property type="entry name" value="S-adenosylmethionine decarboxylase proenzyme"/>
    <property type="match status" value="1"/>
</dbReference>
<dbReference type="Gene3D" id="3.60.90.10">
    <property type="entry name" value="S-adenosylmethionine decarboxylase"/>
    <property type="match status" value="1"/>
</dbReference>
<dbReference type="HAMAP" id="MF_00465">
    <property type="entry name" value="AdoMetDC_2"/>
    <property type="match status" value="1"/>
</dbReference>
<dbReference type="InterPro" id="IPR003826">
    <property type="entry name" value="AdoMetDC_fam_prok"/>
</dbReference>
<dbReference type="InterPro" id="IPR009165">
    <property type="entry name" value="S-AdoMet_deCO2ase_bac"/>
</dbReference>
<dbReference type="InterPro" id="IPR016067">
    <property type="entry name" value="S-AdoMet_deCO2ase_core"/>
</dbReference>
<dbReference type="NCBIfam" id="TIGR03331">
    <property type="entry name" value="SAM_DCase_Eco"/>
    <property type="match status" value="1"/>
</dbReference>
<dbReference type="PANTHER" id="PTHR33866">
    <property type="entry name" value="S-ADENOSYLMETHIONINE DECARBOXYLASE PROENZYME"/>
    <property type="match status" value="1"/>
</dbReference>
<dbReference type="PANTHER" id="PTHR33866:SF1">
    <property type="entry name" value="S-ADENOSYLMETHIONINE DECARBOXYLASE PROENZYME"/>
    <property type="match status" value="1"/>
</dbReference>
<dbReference type="Pfam" id="PF02675">
    <property type="entry name" value="AdoMet_dc"/>
    <property type="match status" value="1"/>
</dbReference>
<dbReference type="PIRSF" id="PIRSF001356">
    <property type="entry name" value="SAM_decarboxylas"/>
    <property type="match status" value="1"/>
</dbReference>
<dbReference type="SUPFAM" id="SSF56276">
    <property type="entry name" value="S-adenosylmethionine decarboxylase"/>
    <property type="match status" value="1"/>
</dbReference>
<comment type="function">
    <text evidence="1">Catalyzes the decarboxylation of S-adenosylmethionine to S-adenosylmethioninamine (dcAdoMet), the propylamine donor required for the synthesis of the polyamines spermine and spermidine from the diamine putrescine.</text>
</comment>
<comment type="catalytic activity">
    <reaction evidence="1">
        <text>S-adenosyl-L-methionine + H(+) = S-adenosyl 3-(methylsulfanyl)propylamine + CO2</text>
        <dbReference type="Rhea" id="RHEA:15981"/>
        <dbReference type="ChEBI" id="CHEBI:15378"/>
        <dbReference type="ChEBI" id="CHEBI:16526"/>
        <dbReference type="ChEBI" id="CHEBI:57443"/>
        <dbReference type="ChEBI" id="CHEBI:59789"/>
        <dbReference type="EC" id="4.1.1.50"/>
    </reaction>
</comment>
<comment type="cofactor">
    <cofactor evidence="1">
        <name>pyruvate</name>
        <dbReference type="ChEBI" id="CHEBI:15361"/>
    </cofactor>
    <text evidence="1">Binds 1 pyruvoyl group covalently per subunit.</text>
</comment>
<comment type="pathway">
    <text evidence="1">Amine and polyamine biosynthesis; S-adenosylmethioninamine biosynthesis; S-adenosylmethioninamine from S-adenosyl-L-methionine: step 1/1.</text>
</comment>
<comment type="subunit">
    <text evidence="1">Heterooctamer of four alpha and four beta chains arranged as a tetramer of alpha/beta heterodimers.</text>
</comment>
<comment type="PTM">
    <text evidence="1">Is synthesized initially as an inactive proenzyme. Formation of the active enzyme involves a self-maturation process in which the active site pyruvoyl group is generated from an internal serine residue via an autocatalytic post-translational modification. Two non-identical subunits are generated from the proenzyme in this reaction, and the pyruvate is formed at the N-terminus of the alpha chain, which is derived from the carboxyl end of the proenzyme. The post-translation cleavage follows an unusual pathway, termed non-hydrolytic serinolysis, in which the side chain hydroxyl group of the serine supplies its oxygen atom to form the C-terminus of the beta chain, while the remainder of the serine residue undergoes an oxidative deamination to produce ammonia and the pyruvoyl group blocking the N-terminus of the alpha chain.</text>
</comment>
<comment type="similarity">
    <text evidence="1">Belongs to the prokaryotic AdoMetDC family. Type 2 subfamily.</text>
</comment>